<organism>
    <name type="scientific">Drosophila erecta</name>
    <name type="common">Fruit fly</name>
    <dbReference type="NCBI Taxonomy" id="7220"/>
    <lineage>
        <taxon>Eukaryota</taxon>
        <taxon>Metazoa</taxon>
        <taxon>Ecdysozoa</taxon>
        <taxon>Arthropoda</taxon>
        <taxon>Hexapoda</taxon>
        <taxon>Insecta</taxon>
        <taxon>Pterygota</taxon>
        <taxon>Neoptera</taxon>
        <taxon>Endopterygota</taxon>
        <taxon>Diptera</taxon>
        <taxon>Brachycera</taxon>
        <taxon>Muscomorpha</taxon>
        <taxon>Ephydroidea</taxon>
        <taxon>Drosophilidae</taxon>
        <taxon>Drosophila</taxon>
        <taxon>Sophophora</taxon>
    </lineage>
</organism>
<proteinExistence type="inferred from homology"/>
<evidence type="ECO:0000250" key="1"/>
<evidence type="ECO:0000250" key="2">
    <source>
        <dbReference type="UniProtKB" id="Q80WB5"/>
    </source>
</evidence>
<evidence type="ECO:0000250" key="3">
    <source>
        <dbReference type="UniProtKB" id="Q96HA8"/>
    </source>
</evidence>
<evidence type="ECO:0000305" key="4"/>
<feature type="chain" id="PRO_0000381824" description="Protein N-terminal glutamine amidohydrolase">
    <location>
        <begin position="1"/>
        <end position="205"/>
    </location>
</feature>
<feature type="active site" evidence="1">
    <location>
        <position position="20"/>
    </location>
</feature>
<feature type="active site" evidence="1">
    <location>
        <position position="74"/>
    </location>
</feature>
<feature type="active site" evidence="1">
    <location>
        <position position="90"/>
    </location>
</feature>
<sequence length="205" mass="23974">MTTDFLFPKIADCSYVSCYCEENVWKLCEQVKRTRPEELSKCYAVFVSNEGRTVPLWRQKAGRGDDQVVIWDYHVFFIHNPLLNRCLVFDLDTTLPFPTYFHKYVTETFRSDLALRPEHHRFFRVIPADTYLIEFSSDRRHMRRPDGSWIKPPPSYPPILSNSNMHCLGDFICMSAGKGPGAVYSLSEFVQNFYKSPHVMAQNNK</sequence>
<keyword id="KW-0378">Hydrolase</keyword>
<gene>
    <name type="primary">tun</name>
    <name type="ORF">GG20549</name>
</gene>
<reference key="1">
    <citation type="journal article" date="2007" name="Nature">
        <title>Evolution of genes and genomes on the Drosophila phylogeny.</title>
        <authorList>
            <consortium name="Drosophila 12 genomes consortium"/>
        </authorList>
    </citation>
    <scope>NUCLEOTIDE SEQUENCE [LARGE SCALE GENOMIC DNA]</scope>
    <source>
        <strain>Tucson 14021-0224.01</strain>
    </source>
</reference>
<dbReference type="EC" id="3.5.1.122" evidence="2"/>
<dbReference type="EMBL" id="CH954179">
    <property type="protein sequence ID" value="EDV55862.1"/>
    <property type="molecule type" value="Genomic_DNA"/>
</dbReference>
<dbReference type="SMR" id="B3NQ86"/>
<dbReference type="EnsemblMetazoa" id="FBtr0140603">
    <property type="protein sequence ID" value="FBpp0139095"/>
    <property type="gene ID" value="FBgn0112739"/>
</dbReference>
<dbReference type="EnsemblMetazoa" id="XM_001975426.3">
    <property type="protein sequence ID" value="XP_001975462.1"/>
    <property type="gene ID" value="LOC6548848"/>
</dbReference>
<dbReference type="GeneID" id="6548848"/>
<dbReference type="KEGG" id="der:6548848"/>
<dbReference type="CTD" id="36743"/>
<dbReference type="eggNOG" id="KOG3261">
    <property type="taxonomic scope" value="Eukaryota"/>
</dbReference>
<dbReference type="HOGENOM" id="CLU_091083_1_0_1"/>
<dbReference type="OMA" id="GWGTVYS"/>
<dbReference type="OrthoDB" id="191192at2759"/>
<dbReference type="PhylomeDB" id="B3NQ86"/>
<dbReference type="ChiTaRS" id="Zasp52">
    <property type="organism name" value="fly"/>
</dbReference>
<dbReference type="Proteomes" id="UP000008711">
    <property type="component" value="Unassembled WGS sequence"/>
</dbReference>
<dbReference type="GO" id="GO:0005829">
    <property type="term" value="C:cytosol"/>
    <property type="evidence" value="ECO:0007669"/>
    <property type="project" value="TreeGrafter"/>
</dbReference>
<dbReference type="GO" id="GO:0005634">
    <property type="term" value="C:nucleus"/>
    <property type="evidence" value="ECO:0007669"/>
    <property type="project" value="TreeGrafter"/>
</dbReference>
<dbReference type="GO" id="GO:0008418">
    <property type="term" value="F:protein-N-terminal asparagine amidohydrolase activity"/>
    <property type="evidence" value="ECO:0007669"/>
    <property type="project" value="InterPro"/>
</dbReference>
<dbReference type="GO" id="GO:0070773">
    <property type="term" value="F:protein-N-terminal glutamine amidohydrolase activity"/>
    <property type="evidence" value="ECO:0007669"/>
    <property type="project" value="UniProtKB-EC"/>
</dbReference>
<dbReference type="FunFam" id="3.10.620.10:FF:000001">
    <property type="entry name" value="Blast:Protein N-terminal glutamine amidohydrolase"/>
    <property type="match status" value="1"/>
</dbReference>
<dbReference type="Gene3D" id="3.10.620.10">
    <property type="entry name" value="Protein N-terminal glutamine amidohydrolase, alpha beta roll"/>
    <property type="match status" value="1"/>
</dbReference>
<dbReference type="InterPro" id="IPR037132">
    <property type="entry name" value="N_Gln_amidohydro_ab_roll_sf"/>
</dbReference>
<dbReference type="InterPro" id="IPR039733">
    <property type="entry name" value="NTAQ1"/>
</dbReference>
<dbReference type="InterPro" id="IPR023128">
    <property type="entry name" value="Prot_N_Gln_amidohydro_ab_roll"/>
</dbReference>
<dbReference type="PANTHER" id="PTHR13035">
    <property type="entry name" value="PROTEIN N-TERMINAL GLUTAMINE AMIDOHYDROLASE"/>
    <property type="match status" value="1"/>
</dbReference>
<dbReference type="PANTHER" id="PTHR13035:SF0">
    <property type="entry name" value="PROTEIN N-TERMINAL GLUTAMINE AMIDOHYDROLASE"/>
    <property type="match status" value="1"/>
</dbReference>
<dbReference type="Pfam" id="PF09764">
    <property type="entry name" value="Nt_Gln_amidase"/>
    <property type="match status" value="1"/>
</dbReference>
<protein>
    <recommendedName>
        <fullName>Protein N-terminal glutamine amidohydrolase</fullName>
        <ecNumber evidence="2">3.5.1.122</ecNumber>
    </recommendedName>
    <alternativeName>
        <fullName>Protein NH2-terminal glutamine deamidase</fullName>
        <shortName>N-terminal Gln amidase</shortName>
        <shortName>Nt(Q)-amidase</shortName>
    </alternativeName>
    <alternativeName>
        <fullName>Protein tungus</fullName>
    </alternativeName>
</protein>
<accession>B3NQ86</accession>
<name>NTAQ1_DROER</name>
<comment type="function">
    <text evidence="2">Mediates the side-chain deamidation of N-terminal glutamine residues to glutamate, an important step in N-end rule pathway of protein degradation. Conversion of the resulting N-terminal glutamine to glutamate renders the protein susceptible to arginylation, polyubiquitination and degradation as specified by the N-end rule. Does not act on substrates with internal or C-terminal glutamine and does not act on non-glutamine residues in any position.</text>
</comment>
<comment type="catalytic activity">
    <reaction evidence="2">
        <text>N-terminal L-glutaminyl-[protein] + H2O = N-terminal L-glutamyl-[protein] + NH4(+)</text>
        <dbReference type="Rhea" id="RHEA:50680"/>
        <dbReference type="Rhea" id="RHEA-COMP:12668"/>
        <dbReference type="Rhea" id="RHEA-COMP:12777"/>
        <dbReference type="ChEBI" id="CHEBI:15377"/>
        <dbReference type="ChEBI" id="CHEBI:28938"/>
        <dbReference type="ChEBI" id="CHEBI:64721"/>
        <dbReference type="ChEBI" id="CHEBI:64722"/>
        <dbReference type="EC" id="3.5.1.122"/>
    </reaction>
</comment>
<comment type="subunit">
    <text evidence="3">Monomer.</text>
</comment>
<comment type="similarity">
    <text evidence="4">Belongs to the NTAQ1 family.</text>
</comment>